<keyword id="KW-0150">Chloroplast</keyword>
<keyword id="KW-0472">Membrane</keyword>
<keyword id="KW-0602">Photosynthesis</keyword>
<keyword id="KW-0603">Photosystem I</keyword>
<keyword id="KW-0934">Plastid</keyword>
<keyword id="KW-0793">Thylakoid</keyword>
<accession>Q9TLR2</accession>
<proteinExistence type="inferred from homology"/>
<feature type="chain" id="PRO_0000206042" description="Photosystem I reaction center subunit II">
    <location>
        <begin position="1"/>
        <end position="140"/>
    </location>
</feature>
<organism>
    <name type="scientific">Cyanidium caldarium</name>
    <name type="common">Red alga</name>
    <dbReference type="NCBI Taxonomy" id="2771"/>
    <lineage>
        <taxon>Eukaryota</taxon>
        <taxon>Rhodophyta</taxon>
        <taxon>Bangiophyceae</taxon>
        <taxon>Cyanidiales</taxon>
        <taxon>Cyanidiaceae</taxon>
        <taxon>Cyanidium</taxon>
    </lineage>
</organism>
<sequence length="140" mass="15913">MQQSLNLKMPSPEFYGNTGGWLRSSDIEEKYAITWSSKNEDIFEIPTGGVAKMKAGDNLLYLAKKEQCLALGNQLKIKFKILNFKIYRIFPNGEAQFLHPKDGVFPEKVNEGRKPIGKIDHNIGKNLNPAEVKFTHKTIF</sequence>
<dbReference type="EMBL" id="AF022186">
    <property type="protein sequence ID" value="AAF12887.1"/>
    <property type="molecule type" value="Genomic_DNA"/>
</dbReference>
<dbReference type="RefSeq" id="NP_045207.1">
    <property type="nucleotide sequence ID" value="NC_001840.1"/>
</dbReference>
<dbReference type="EMDB" id="EMD-37480"/>
<dbReference type="SMR" id="Q9TLR2"/>
<dbReference type="GeneID" id="800110"/>
<dbReference type="GO" id="GO:0009535">
    <property type="term" value="C:chloroplast thylakoid membrane"/>
    <property type="evidence" value="ECO:0007669"/>
    <property type="project" value="UniProtKB-SubCell"/>
</dbReference>
<dbReference type="GO" id="GO:0009538">
    <property type="term" value="C:photosystem I reaction center"/>
    <property type="evidence" value="ECO:0007669"/>
    <property type="project" value="InterPro"/>
</dbReference>
<dbReference type="GO" id="GO:0015979">
    <property type="term" value="P:photosynthesis"/>
    <property type="evidence" value="ECO:0007669"/>
    <property type="project" value="UniProtKB-KW"/>
</dbReference>
<dbReference type="Gene3D" id="3.30.1470.10">
    <property type="entry name" value="Photosystem I PsaD, reaction center subunit II"/>
    <property type="match status" value="1"/>
</dbReference>
<dbReference type="InterPro" id="IPR003685">
    <property type="entry name" value="PsaD"/>
</dbReference>
<dbReference type="InterPro" id="IPR036579">
    <property type="entry name" value="PsaD_sf"/>
</dbReference>
<dbReference type="PANTHER" id="PTHR31982:SF5">
    <property type="entry name" value="PHOTOSYSTEM I REACTION CENTER SUBUNIT II, CHLOROPLASTIC"/>
    <property type="match status" value="1"/>
</dbReference>
<dbReference type="PANTHER" id="PTHR31982">
    <property type="entry name" value="PHOTOSYSTEM I REACTION CENTER SUBUNIT II-1, CHLOROPLASTIC-RELATED"/>
    <property type="match status" value="1"/>
</dbReference>
<dbReference type="Pfam" id="PF02531">
    <property type="entry name" value="PsaD"/>
    <property type="match status" value="1"/>
</dbReference>
<dbReference type="SUPFAM" id="SSF64234">
    <property type="entry name" value="Photosystem I subunit PsaD"/>
    <property type="match status" value="1"/>
</dbReference>
<gene>
    <name type="primary">psaD</name>
</gene>
<name>PSAD_CYACA</name>
<evidence type="ECO:0000250" key="1"/>
<evidence type="ECO:0000305" key="2"/>
<reference key="1">
    <citation type="journal article" date="2000" name="J. Mol. Evol.">
        <title>The structure and gene repertoire of an ancient red algal plastid genome.</title>
        <authorList>
            <person name="Gloeckner G."/>
            <person name="Rosenthal A."/>
            <person name="Valentin K.-U."/>
        </authorList>
    </citation>
    <scope>NUCLEOTIDE SEQUENCE [LARGE SCALE GENOMIC DNA]</scope>
    <source>
        <strain>RK-1</strain>
    </source>
</reference>
<protein>
    <recommendedName>
        <fullName>Photosystem I reaction center subunit II</fullName>
    </recommendedName>
    <alternativeName>
        <fullName>Photosystem I 16 kDa polypeptide</fullName>
        <shortName>PSI-D</shortName>
    </alternativeName>
</protein>
<geneLocation type="chloroplast"/>
<comment type="function">
    <text>PsaD can form complexes with ferredoxin and ferredoxin-oxidoreductase in photosystem I (PS I) reaction center.</text>
</comment>
<comment type="subcellular location">
    <subcellularLocation>
        <location evidence="1">Plastid</location>
        <location evidence="1">Chloroplast thylakoid membrane</location>
        <topology evidence="1">Peripheral membrane protein</topology>
        <orientation evidence="1">Stromal side</orientation>
    </subcellularLocation>
</comment>
<comment type="similarity">
    <text evidence="2">Belongs to the PsaD family.</text>
</comment>